<sequence length="174" mass="20610">MIDSDGFRANVGIIICNRFGQVMWARRFGQHSWQFPQGGVDEGESAEQAMYRELYEEVGLRPEHVQVLTSTRSWLRYRLPKRLIRQDSKPLCIGQKQKWFLLQLKSQESAIDLAASGHPEFDDWRWVSYWYPVRQVVSFKRDVYRKVMKEFAPTALPFQAQENTQGGRRRGRRR</sequence>
<dbReference type="EC" id="3.6.1.-" evidence="1"/>
<dbReference type="EMBL" id="CP000606">
    <property type="protein sequence ID" value="ABO22909.1"/>
    <property type="molecule type" value="Genomic_DNA"/>
</dbReference>
<dbReference type="RefSeq" id="WP_011864842.1">
    <property type="nucleotide sequence ID" value="NC_009092.1"/>
</dbReference>
<dbReference type="SMR" id="A3QBR1"/>
<dbReference type="STRING" id="323850.Shew_1038"/>
<dbReference type="KEGG" id="slo:Shew_1038"/>
<dbReference type="eggNOG" id="COG0494">
    <property type="taxonomic scope" value="Bacteria"/>
</dbReference>
<dbReference type="HOGENOM" id="CLU_087195_3_1_6"/>
<dbReference type="OrthoDB" id="9816040at2"/>
<dbReference type="Proteomes" id="UP000001558">
    <property type="component" value="Chromosome"/>
</dbReference>
<dbReference type="GO" id="GO:0005737">
    <property type="term" value="C:cytoplasm"/>
    <property type="evidence" value="ECO:0007669"/>
    <property type="project" value="TreeGrafter"/>
</dbReference>
<dbReference type="GO" id="GO:0034353">
    <property type="term" value="F:mRNA 5'-diphosphatase activity"/>
    <property type="evidence" value="ECO:0007669"/>
    <property type="project" value="TreeGrafter"/>
</dbReference>
<dbReference type="GO" id="GO:0006402">
    <property type="term" value="P:mRNA catabolic process"/>
    <property type="evidence" value="ECO:0007669"/>
    <property type="project" value="TreeGrafter"/>
</dbReference>
<dbReference type="CDD" id="cd03671">
    <property type="entry name" value="NUDIX_Ap4A_hydrolase_plant_like"/>
    <property type="match status" value="1"/>
</dbReference>
<dbReference type="FunFam" id="3.90.79.10:FF:000001">
    <property type="entry name" value="RNA pyrophosphohydrolase"/>
    <property type="match status" value="1"/>
</dbReference>
<dbReference type="Gene3D" id="3.90.79.10">
    <property type="entry name" value="Nucleoside Triphosphate Pyrophosphohydrolase"/>
    <property type="match status" value="1"/>
</dbReference>
<dbReference type="HAMAP" id="MF_00298">
    <property type="entry name" value="Nudix_RppH"/>
    <property type="match status" value="1"/>
</dbReference>
<dbReference type="InterPro" id="IPR020476">
    <property type="entry name" value="Nudix_hydrolase"/>
</dbReference>
<dbReference type="InterPro" id="IPR015797">
    <property type="entry name" value="NUDIX_hydrolase-like_dom_sf"/>
</dbReference>
<dbReference type="InterPro" id="IPR020084">
    <property type="entry name" value="NUDIX_hydrolase_CS"/>
</dbReference>
<dbReference type="InterPro" id="IPR000086">
    <property type="entry name" value="NUDIX_hydrolase_dom"/>
</dbReference>
<dbReference type="InterPro" id="IPR022927">
    <property type="entry name" value="RppH"/>
</dbReference>
<dbReference type="NCBIfam" id="NF001934">
    <property type="entry name" value="PRK00714.1-1"/>
    <property type="match status" value="1"/>
</dbReference>
<dbReference type="NCBIfam" id="NF001937">
    <property type="entry name" value="PRK00714.1-4"/>
    <property type="match status" value="1"/>
</dbReference>
<dbReference type="NCBIfam" id="NF001938">
    <property type="entry name" value="PRK00714.1-5"/>
    <property type="match status" value="1"/>
</dbReference>
<dbReference type="PANTHER" id="PTHR23114">
    <property type="entry name" value="M7GPPPN-MRNA HYDROLASE"/>
    <property type="match status" value="1"/>
</dbReference>
<dbReference type="PANTHER" id="PTHR23114:SF17">
    <property type="entry name" value="M7GPPPN-MRNA HYDROLASE"/>
    <property type="match status" value="1"/>
</dbReference>
<dbReference type="Pfam" id="PF00293">
    <property type="entry name" value="NUDIX"/>
    <property type="match status" value="1"/>
</dbReference>
<dbReference type="PRINTS" id="PR00502">
    <property type="entry name" value="NUDIXFAMILY"/>
</dbReference>
<dbReference type="SUPFAM" id="SSF55811">
    <property type="entry name" value="Nudix"/>
    <property type="match status" value="1"/>
</dbReference>
<dbReference type="PROSITE" id="PS51462">
    <property type="entry name" value="NUDIX"/>
    <property type="match status" value="1"/>
</dbReference>
<dbReference type="PROSITE" id="PS00893">
    <property type="entry name" value="NUDIX_BOX"/>
    <property type="match status" value="1"/>
</dbReference>
<name>RPPH_SHELP</name>
<accession>A3QBR1</accession>
<keyword id="KW-0378">Hydrolase</keyword>
<keyword id="KW-1185">Reference proteome</keyword>
<evidence type="ECO:0000255" key="1">
    <source>
        <dbReference type="HAMAP-Rule" id="MF_00298"/>
    </source>
</evidence>
<protein>
    <recommendedName>
        <fullName evidence="1">RNA pyrophosphohydrolase</fullName>
        <ecNumber evidence="1">3.6.1.-</ecNumber>
    </recommendedName>
    <alternativeName>
        <fullName evidence="1">(Di)nucleoside polyphosphate hydrolase</fullName>
    </alternativeName>
</protein>
<comment type="function">
    <text evidence="1">Accelerates the degradation of transcripts by removing pyrophosphate from the 5'-end of triphosphorylated RNA, leading to a more labile monophosphorylated state that can stimulate subsequent ribonuclease cleavage.</text>
</comment>
<comment type="cofactor">
    <cofactor evidence="1">
        <name>a divalent metal cation</name>
        <dbReference type="ChEBI" id="CHEBI:60240"/>
    </cofactor>
</comment>
<comment type="similarity">
    <text evidence="1">Belongs to the Nudix hydrolase family. RppH subfamily.</text>
</comment>
<proteinExistence type="inferred from homology"/>
<organism>
    <name type="scientific">Shewanella loihica (strain ATCC BAA-1088 / PV-4)</name>
    <dbReference type="NCBI Taxonomy" id="323850"/>
    <lineage>
        <taxon>Bacteria</taxon>
        <taxon>Pseudomonadati</taxon>
        <taxon>Pseudomonadota</taxon>
        <taxon>Gammaproteobacteria</taxon>
        <taxon>Alteromonadales</taxon>
        <taxon>Shewanellaceae</taxon>
        <taxon>Shewanella</taxon>
    </lineage>
</organism>
<gene>
    <name evidence="1" type="primary">rppH</name>
    <name evidence="1" type="synonym">nudH</name>
    <name type="ordered locus">Shew_1038</name>
</gene>
<reference key="1">
    <citation type="submission" date="2007-03" db="EMBL/GenBank/DDBJ databases">
        <title>Complete sequence of Shewanella loihica PV-4.</title>
        <authorList>
            <consortium name="US DOE Joint Genome Institute"/>
            <person name="Copeland A."/>
            <person name="Lucas S."/>
            <person name="Lapidus A."/>
            <person name="Barry K."/>
            <person name="Detter J.C."/>
            <person name="Glavina del Rio T."/>
            <person name="Hammon N."/>
            <person name="Israni S."/>
            <person name="Dalin E."/>
            <person name="Tice H."/>
            <person name="Pitluck S."/>
            <person name="Chain P."/>
            <person name="Malfatti S."/>
            <person name="Shin M."/>
            <person name="Vergez L."/>
            <person name="Schmutz J."/>
            <person name="Larimer F."/>
            <person name="Land M."/>
            <person name="Hauser L."/>
            <person name="Kyrpides N."/>
            <person name="Mikhailova N."/>
            <person name="Romine M.F."/>
            <person name="Serres G."/>
            <person name="Fredrickson J."/>
            <person name="Tiedje J."/>
            <person name="Richardson P."/>
        </authorList>
    </citation>
    <scope>NUCLEOTIDE SEQUENCE [LARGE SCALE GENOMIC DNA]</scope>
    <source>
        <strain>ATCC BAA-1088 / PV-4</strain>
    </source>
</reference>
<feature type="chain" id="PRO_1000021997" description="RNA pyrophosphohydrolase">
    <location>
        <begin position="1"/>
        <end position="174"/>
    </location>
</feature>
<feature type="domain" description="Nudix hydrolase" evidence="1">
    <location>
        <begin position="6"/>
        <end position="149"/>
    </location>
</feature>
<feature type="short sequence motif" description="Nudix box">
    <location>
        <begin position="38"/>
        <end position="59"/>
    </location>
</feature>